<proteinExistence type="inferred from homology"/>
<protein>
    <recommendedName>
        <fullName evidence="1">Bifunctional protein GlmU</fullName>
    </recommendedName>
    <domain>
        <recommendedName>
            <fullName evidence="1">UDP-N-acetylglucosamine pyrophosphorylase</fullName>
            <ecNumber evidence="1">2.7.7.23</ecNumber>
        </recommendedName>
        <alternativeName>
            <fullName evidence="1">N-acetylglucosamine-1-phosphate uridyltransferase</fullName>
        </alternativeName>
    </domain>
    <domain>
        <recommendedName>
            <fullName evidence="1">Glucosamine-1-phosphate N-acetyltransferase</fullName>
            <ecNumber evidence="1">2.3.1.157</ecNumber>
        </recommendedName>
    </domain>
</protein>
<feature type="chain" id="PRO_0000233869" description="Bifunctional protein GlmU">
    <location>
        <begin position="1"/>
        <end position="453"/>
    </location>
</feature>
<feature type="region of interest" description="Pyrophosphorylase" evidence="1">
    <location>
        <begin position="1"/>
        <end position="225"/>
    </location>
</feature>
<feature type="region of interest" description="Linker" evidence="1">
    <location>
        <begin position="226"/>
        <end position="246"/>
    </location>
</feature>
<feature type="region of interest" description="N-acetyltransferase" evidence="1">
    <location>
        <begin position="247"/>
        <end position="453"/>
    </location>
</feature>
<feature type="active site" description="Proton acceptor" evidence="1">
    <location>
        <position position="359"/>
    </location>
</feature>
<feature type="binding site" evidence="1">
    <location>
        <begin position="7"/>
        <end position="10"/>
    </location>
    <ligand>
        <name>UDP-N-acetyl-alpha-D-glucosamine</name>
        <dbReference type="ChEBI" id="CHEBI:57705"/>
    </ligand>
</feature>
<feature type="binding site" evidence="1">
    <location>
        <position position="21"/>
    </location>
    <ligand>
        <name>UDP-N-acetyl-alpha-D-glucosamine</name>
        <dbReference type="ChEBI" id="CHEBI:57705"/>
    </ligand>
</feature>
<feature type="binding site" evidence="1">
    <location>
        <position position="72"/>
    </location>
    <ligand>
        <name>UDP-N-acetyl-alpha-D-glucosamine</name>
        <dbReference type="ChEBI" id="CHEBI:57705"/>
    </ligand>
</feature>
<feature type="binding site" evidence="1">
    <location>
        <begin position="77"/>
        <end position="78"/>
    </location>
    <ligand>
        <name>UDP-N-acetyl-alpha-D-glucosamine</name>
        <dbReference type="ChEBI" id="CHEBI:57705"/>
    </ligand>
</feature>
<feature type="binding site" evidence="1">
    <location>
        <position position="102"/>
    </location>
    <ligand>
        <name>Mg(2+)</name>
        <dbReference type="ChEBI" id="CHEBI:18420"/>
    </ligand>
</feature>
<feature type="binding site" evidence="1">
    <location>
        <position position="138"/>
    </location>
    <ligand>
        <name>UDP-N-acetyl-alpha-D-glucosamine</name>
        <dbReference type="ChEBI" id="CHEBI:57705"/>
    </ligand>
</feature>
<feature type="binding site" evidence="1">
    <location>
        <position position="152"/>
    </location>
    <ligand>
        <name>UDP-N-acetyl-alpha-D-glucosamine</name>
        <dbReference type="ChEBI" id="CHEBI:57705"/>
    </ligand>
</feature>
<feature type="binding site" evidence="1">
    <location>
        <position position="167"/>
    </location>
    <ligand>
        <name>UDP-N-acetyl-alpha-D-glucosamine</name>
        <dbReference type="ChEBI" id="CHEBI:57705"/>
    </ligand>
</feature>
<feature type="binding site" evidence="1">
    <location>
        <position position="223"/>
    </location>
    <ligand>
        <name>Mg(2+)</name>
        <dbReference type="ChEBI" id="CHEBI:18420"/>
    </ligand>
</feature>
<feature type="binding site" evidence="1">
    <location>
        <position position="223"/>
    </location>
    <ligand>
        <name>UDP-N-acetyl-alpha-D-glucosamine</name>
        <dbReference type="ChEBI" id="CHEBI:57705"/>
    </ligand>
</feature>
<feature type="binding site" evidence="1">
    <location>
        <position position="329"/>
    </location>
    <ligand>
        <name>UDP-N-acetyl-alpha-D-glucosamine</name>
        <dbReference type="ChEBI" id="CHEBI:57705"/>
    </ligand>
</feature>
<feature type="binding site" evidence="1">
    <location>
        <position position="347"/>
    </location>
    <ligand>
        <name>UDP-N-acetyl-alpha-D-glucosamine</name>
        <dbReference type="ChEBI" id="CHEBI:57705"/>
    </ligand>
</feature>
<feature type="binding site" evidence="1">
    <location>
        <position position="362"/>
    </location>
    <ligand>
        <name>UDP-N-acetyl-alpha-D-glucosamine</name>
        <dbReference type="ChEBI" id="CHEBI:57705"/>
    </ligand>
</feature>
<feature type="binding site" evidence="1">
    <location>
        <position position="373"/>
    </location>
    <ligand>
        <name>UDP-N-acetyl-alpha-D-glucosamine</name>
        <dbReference type="ChEBI" id="CHEBI:57705"/>
    </ligand>
</feature>
<feature type="binding site" evidence="1">
    <location>
        <position position="376"/>
    </location>
    <ligand>
        <name>acetyl-CoA</name>
        <dbReference type="ChEBI" id="CHEBI:57288"/>
    </ligand>
</feature>
<feature type="binding site" evidence="1">
    <location>
        <begin position="382"/>
        <end position="383"/>
    </location>
    <ligand>
        <name>acetyl-CoA</name>
        <dbReference type="ChEBI" id="CHEBI:57288"/>
    </ligand>
</feature>
<feature type="binding site" evidence="1">
    <location>
        <position position="401"/>
    </location>
    <ligand>
        <name>acetyl-CoA</name>
        <dbReference type="ChEBI" id="CHEBI:57288"/>
    </ligand>
</feature>
<feature type="binding site" evidence="1">
    <location>
        <position position="419"/>
    </location>
    <ligand>
        <name>acetyl-CoA</name>
        <dbReference type="ChEBI" id="CHEBI:57288"/>
    </ligand>
</feature>
<feature type="binding site" evidence="1">
    <location>
        <position position="436"/>
    </location>
    <ligand>
        <name>acetyl-CoA</name>
        <dbReference type="ChEBI" id="CHEBI:57288"/>
    </ligand>
</feature>
<accession>Q72LP1</accession>
<organism>
    <name type="scientific">Thermus thermophilus (strain ATCC BAA-163 / DSM 7039 / HB27)</name>
    <dbReference type="NCBI Taxonomy" id="262724"/>
    <lineage>
        <taxon>Bacteria</taxon>
        <taxon>Thermotogati</taxon>
        <taxon>Deinococcota</taxon>
        <taxon>Deinococci</taxon>
        <taxon>Thermales</taxon>
        <taxon>Thermaceae</taxon>
        <taxon>Thermus</taxon>
    </lineage>
</organism>
<reference key="1">
    <citation type="journal article" date="2004" name="Nat. Biotechnol.">
        <title>The genome sequence of the extreme thermophile Thermus thermophilus.</title>
        <authorList>
            <person name="Henne A."/>
            <person name="Brueggemann H."/>
            <person name="Raasch C."/>
            <person name="Wiezer A."/>
            <person name="Hartsch T."/>
            <person name="Liesegang H."/>
            <person name="Johann A."/>
            <person name="Lienard T."/>
            <person name="Gohl O."/>
            <person name="Martinez-Arias R."/>
            <person name="Jacobi C."/>
            <person name="Starkuviene V."/>
            <person name="Schlenczeck S."/>
            <person name="Dencker S."/>
            <person name="Huber R."/>
            <person name="Klenk H.-P."/>
            <person name="Kramer W."/>
            <person name="Merkl R."/>
            <person name="Gottschalk G."/>
            <person name="Fritz H.-J."/>
        </authorList>
    </citation>
    <scope>NUCLEOTIDE SEQUENCE [LARGE SCALE GENOMIC DNA]</scope>
    <source>
        <strain>ATCC BAA-163 / DSM 7039 / HB27</strain>
    </source>
</reference>
<evidence type="ECO:0000255" key="1">
    <source>
        <dbReference type="HAMAP-Rule" id="MF_01631"/>
    </source>
</evidence>
<evidence type="ECO:0000305" key="2"/>
<keyword id="KW-0012">Acyltransferase</keyword>
<keyword id="KW-0133">Cell shape</keyword>
<keyword id="KW-0961">Cell wall biogenesis/degradation</keyword>
<keyword id="KW-0963">Cytoplasm</keyword>
<keyword id="KW-0460">Magnesium</keyword>
<keyword id="KW-0479">Metal-binding</keyword>
<keyword id="KW-0511">Multifunctional enzyme</keyword>
<keyword id="KW-0548">Nucleotidyltransferase</keyword>
<keyword id="KW-0573">Peptidoglycan synthesis</keyword>
<keyword id="KW-0677">Repeat</keyword>
<keyword id="KW-0808">Transferase</keyword>
<gene>
    <name evidence="1" type="primary">glmU</name>
    <name type="ordered locus">TT_C0017</name>
</gene>
<comment type="function">
    <text evidence="1">Catalyzes the last two sequential reactions in the de novo biosynthetic pathway for UDP-N-acetylglucosamine (UDP-GlcNAc). The C-terminal domain catalyzes the transfer of acetyl group from acetyl coenzyme A to glucosamine-1-phosphate (GlcN-1-P) to produce N-acetylglucosamine-1-phosphate (GlcNAc-1-P), which is converted into UDP-GlcNAc by the transfer of uridine 5-monophosphate (from uridine 5-triphosphate), a reaction catalyzed by the N-terminal domain.</text>
</comment>
<comment type="catalytic activity">
    <reaction evidence="1">
        <text>alpha-D-glucosamine 1-phosphate + acetyl-CoA = N-acetyl-alpha-D-glucosamine 1-phosphate + CoA + H(+)</text>
        <dbReference type="Rhea" id="RHEA:13725"/>
        <dbReference type="ChEBI" id="CHEBI:15378"/>
        <dbReference type="ChEBI" id="CHEBI:57287"/>
        <dbReference type="ChEBI" id="CHEBI:57288"/>
        <dbReference type="ChEBI" id="CHEBI:57776"/>
        <dbReference type="ChEBI" id="CHEBI:58516"/>
        <dbReference type="EC" id="2.3.1.157"/>
    </reaction>
</comment>
<comment type="catalytic activity">
    <reaction evidence="1">
        <text>N-acetyl-alpha-D-glucosamine 1-phosphate + UTP + H(+) = UDP-N-acetyl-alpha-D-glucosamine + diphosphate</text>
        <dbReference type="Rhea" id="RHEA:13509"/>
        <dbReference type="ChEBI" id="CHEBI:15378"/>
        <dbReference type="ChEBI" id="CHEBI:33019"/>
        <dbReference type="ChEBI" id="CHEBI:46398"/>
        <dbReference type="ChEBI" id="CHEBI:57705"/>
        <dbReference type="ChEBI" id="CHEBI:57776"/>
        <dbReference type="EC" id="2.7.7.23"/>
    </reaction>
</comment>
<comment type="cofactor">
    <cofactor evidence="1">
        <name>Mg(2+)</name>
        <dbReference type="ChEBI" id="CHEBI:18420"/>
    </cofactor>
    <text evidence="1">Binds 1 Mg(2+) ion per subunit.</text>
</comment>
<comment type="pathway">
    <text evidence="1">Nucleotide-sugar biosynthesis; UDP-N-acetyl-alpha-D-glucosamine biosynthesis; N-acetyl-alpha-D-glucosamine 1-phosphate from alpha-D-glucosamine 6-phosphate (route II): step 2/2.</text>
</comment>
<comment type="pathway">
    <text evidence="1">Nucleotide-sugar biosynthesis; UDP-N-acetyl-alpha-D-glucosamine biosynthesis; UDP-N-acetyl-alpha-D-glucosamine from N-acetyl-alpha-D-glucosamine 1-phosphate: step 1/1.</text>
</comment>
<comment type="pathway">
    <text evidence="1">Bacterial outer membrane biogenesis; LPS lipid A biosynthesis.</text>
</comment>
<comment type="subunit">
    <text evidence="1">Homotrimer.</text>
</comment>
<comment type="subcellular location">
    <subcellularLocation>
        <location evidence="1">Cytoplasm</location>
    </subcellularLocation>
</comment>
<comment type="similarity">
    <text evidence="1">In the N-terminal section; belongs to the N-acetylglucosamine-1-phosphate uridyltransferase family.</text>
</comment>
<comment type="similarity">
    <text evidence="1">In the C-terminal section; belongs to the transferase hexapeptide repeat family.</text>
</comment>
<comment type="sequence caution" evidence="2">
    <conflict type="erroneous initiation">
        <sequence resource="EMBL-CDS" id="AAS80365"/>
    </conflict>
</comment>
<sequence>MHAHVILAAGQGTRMRSRLPKVLHPLLGKPMLLYALEAALALKPERLVVVVGHGGEKVVEALEGYPVEVAWQKEQLGTAHALLQAEGLLRDFPGPFLVTQGDTPLLSPRTLEALLRRVREGAGMALLTAELPDPTGYGRILREGEEVLGNVEEKDAPPEVRAIREVNAGAYAFDGFLFQALKEVRNENAAREYYLPDLVAIYRAHGRRVLAVRGVAEEALGVNTREELARVEGVLLRRLRAEWMGKGVRMILPETIYLEPSVELAPDVTLWPGAVLKGKTRIGEGCEVGPYAVLEDTVLEPGAKVLAHTVAQGAHLHPGASAGPFARLRPGAVLMEEVHVGNFVEVKNSLLHKGVKAGHLAYLGDAEVGEGTNIGAGVITANYDGKRKHKTEIGKKAFIGSNSVLVAPVRVGDRALVGAGSVITQDVPEGALAVARERQKNLEGYALRKLGEG</sequence>
<dbReference type="EC" id="2.7.7.23" evidence="1"/>
<dbReference type="EC" id="2.3.1.157" evidence="1"/>
<dbReference type="EMBL" id="AE017221">
    <property type="protein sequence ID" value="AAS80365.1"/>
    <property type="status" value="ALT_INIT"/>
    <property type="molecule type" value="Genomic_DNA"/>
</dbReference>
<dbReference type="RefSeq" id="WP_041443301.1">
    <property type="nucleotide sequence ID" value="NC_005835.1"/>
</dbReference>
<dbReference type="SMR" id="Q72LP1"/>
<dbReference type="KEGG" id="tth:TT_C0017"/>
<dbReference type="eggNOG" id="COG1207">
    <property type="taxonomic scope" value="Bacteria"/>
</dbReference>
<dbReference type="HOGENOM" id="CLU_029499_15_2_0"/>
<dbReference type="UniPathway" id="UPA00113">
    <property type="reaction ID" value="UER00532"/>
</dbReference>
<dbReference type="UniPathway" id="UPA00113">
    <property type="reaction ID" value="UER00533"/>
</dbReference>
<dbReference type="UniPathway" id="UPA00973"/>
<dbReference type="Proteomes" id="UP000000592">
    <property type="component" value="Chromosome"/>
</dbReference>
<dbReference type="GO" id="GO:0005737">
    <property type="term" value="C:cytoplasm"/>
    <property type="evidence" value="ECO:0007669"/>
    <property type="project" value="UniProtKB-SubCell"/>
</dbReference>
<dbReference type="GO" id="GO:0016020">
    <property type="term" value="C:membrane"/>
    <property type="evidence" value="ECO:0007669"/>
    <property type="project" value="GOC"/>
</dbReference>
<dbReference type="GO" id="GO:0019134">
    <property type="term" value="F:glucosamine-1-phosphate N-acetyltransferase activity"/>
    <property type="evidence" value="ECO:0007669"/>
    <property type="project" value="UniProtKB-UniRule"/>
</dbReference>
<dbReference type="GO" id="GO:0000287">
    <property type="term" value="F:magnesium ion binding"/>
    <property type="evidence" value="ECO:0007669"/>
    <property type="project" value="UniProtKB-UniRule"/>
</dbReference>
<dbReference type="GO" id="GO:0003977">
    <property type="term" value="F:UDP-N-acetylglucosamine diphosphorylase activity"/>
    <property type="evidence" value="ECO:0007669"/>
    <property type="project" value="UniProtKB-UniRule"/>
</dbReference>
<dbReference type="GO" id="GO:0000902">
    <property type="term" value="P:cell morphogenesis"/>
    <property type="evidence" value="ECO:0007669"/>
    <property type="project" value="UniProtKB-UniRule"/>
</dbReference>
<dbReference type="GO" id="GO:0071555">
    <property type="term" value="P:cell wall organization"/>
    <property type="evidence" value="ECO:0007669"/>
    <property type="project" value="UniProtKB-KW"/>
</dbReference>
<dbReference type="GO" id="GO:0009245">
    <property type="term" value="P:lipid A biosynthetic process"/>
    <property type="evidence" value="ECO:0007669"/>
    <property type="project" value="UniProtKB-UniRule"/>
</dbReference>
<dbReference type="GO" id="GO:0009252">
    <property type="term" value="P:peptidoglycan biosynthetic process"/>
    <property type="evidence" value="ECO:0007669"/>
    <property type="project" value="UniProtKB-UniRule"/>
</dbReference>
<dbReference type="GO" id="GO:0008360">
    <property type="term" value="P:regulation of cell shape"/>
    <property type="evidence" value="ECO:0007669"/>
    <property type="project" value="UniProtKB-KW"/>
</dbReference>
<dbReference type="GO" id="GO:0006048">
    <property type="term" value="P:UDP-N-acetylglucosamine biosynthetic process"/>
    <property type="evidence" value="ECO:0007669"/>
    <property type="project" value="UniProtKB-UniPathway"/>
</dbReference>
<dbReference type="CDD" id="cd02540">
    <property type="entry name" value="GT2_GlmU_N_bac"/>
    <property type="match status" value="1"/>
</dbReference>
<dbReference type="CDD" id="cd03353">
    <property type="entry name" value="LbH_GlmU_C"/>
    <property type="match status" value="1"/>
</dbReference>
<dbReference type="Gene3D" id="2.160.10.10">
    <property type="entry name" value="Hexapeptide repeat proteins"/>
    <property type="match status" value="1"/>
</dbReference>
<dbReference type="Gene3D" id="3.90.550.10">
    <property type="entry name" value="Spore Coat Polysaccharide Biosynthesis Protein SpsA, Chain A"/>
    <property type="match status" value="1"/>
</dbReference>
<dbReference type="HAMAP" id="MF_01631">
    <property type="entry name" value="GlmU"/>
    <property type="match status" value="1"/>
</dbReference>
<dbReference type="InterPro" id="IPR005882">
    <property type="entry name" value="Bifunctional_GlmU"/>
</dbReference>
<dbReference type="InterPro" id="IPR050065">
    <property type="entry name" value="GlmU-like"/>
</dbReference>
<dbReference type="InterPro" id="IPR038009">
    <property type="entry name" value="GlmU_C_LbH"/>
</dbReference>
<dbReference type="InterPro" id="IPR001451">
    <property type="entry name" value="Hexapep"/>
</dbReference>
<dbReference type="InterPro" id="IPR018357">
    <property type="entry name" value="Hexapep_transf_CS"/>
</dbReference>
<dbReference type="InterPro" id="IPR025877">
    <property type="entry name" value="MobA-like_NTP_Trfase"/>
</dbReference>
<dbReference type="InterPro" id="IPR029044">
    <property type="entry name" value="Nucleotide-diphossugar_trans"/>
</dbReference>
<dbReference type="InterPro" id="IPR011004">
    <property type="entry name" value="Trimer_LpxA-like_sf"/>
</dbReference>
<dbReference type="NCBIfam" id="TIGR01173">
    <property type="entry name" value="glmU"/>
    <property type="match status" value="1"/>
</dbReference>
<dbReference type="PANTHER" id="PTHR43584:SF3">
    <property type="entry name" value="BIFUNCTIONAL PROTEIN GLMU"/>
    <property type="match status" value="1"/>
</dbReference>
<dbReference type="PANTHER" id="PTHR43584">
    <property type="entry name" value="NUCLEOTIDYL TRANSFERASE"/>
    <property type="match status" value="1"/>
</dbReference>
<dbReference type="Pfam" id="PF00132">
    <property type="entry name" value="Hexapep"/>
    <property type="match status" value="1"/>
</dbReference>
<dbReference type="Pfam" id="PF12804">
    <property type="entry name" value="NTP_transf_3"/>
    <property type="match status" value="1"/>
</dbReference>
<dbReference type="SUPFAM" id="SSF53448">
    <property type="entry name" value="Nucleotide-diphospho-sugar transferases"/>
    <property type="match status" value="1"/>
</dbReference>
<dbReference type="SUPFAM" id="SSF51161">
    <property type="entry name" value="Trimeric LpxA-like enzymes"/>
    <property type="match status" value="1"/>
</dbReference>
<dbReference type="PROSITE" id="PS00101">
    <property type="entry name" value="HEXAPEP_TRANSFERASES"/>
    <property type="match status" value="1"/>
</dbReference>
<name>GLMU_THET2</name>